<organism>
    <name type="scientific">Plasmodium berghei (strain Anka)</name>
    <dbReference type="NCBI Taxonomy" id="5823"/>
    <lineage>
        <taxon>Eukaryota</taxon>
        <taxon>Sar</taxon>
        <taxon>Alveolata</taxon>
        <taxon>Apicomplexa</taxon>
        <taxon>Aconoidasida</taxon>
        <taxon>Haemosporida</taxon>
        <taxon>Plasmodiidae</taxon>
        <taxon>Plasmodium</taxon>
        <taxon>Plasmodium (Vinckeia)</taxon>
    </lineage>
</organism>
<comment type="function">
    <text evidence="1">Bifunctional enzyme. Involved in de novo dTMP biosynthesis. Key enzyme in folate metabolism. Catalyzes an essential reaction for de novo glycine and purine synthesis, DNA precursor synthesis, and for the conversion of dUMP to dTMP (By similarity).</text>
</comment>
<comment type="catalytic activity">
    <reaction>
        <text>(6S)-5,6,7,8-tetrahydrofolate + NADP(+) = 7,8-dihydrofolate + NADPH + H(+)</text>
        <dbReference type="Rhea" id="RHEA:15009"/>
        <dbReference type="ChEBI" id="CHEBI:15378"/>
        <dbReference type="ChEBI" id="CHEBI:57451"/>
        <dbReference type="ChEBI" id="CHEBI:57453"/>
        <dbReference type="ChEBI" id="CHEBI:57783"/>
        <dbReference type="ChEBI" id="CHEBI:58349"/>
        <dbReference type="EC" id="1.5.1.3"/>
    </reaction>
</comment>
<comment type="catalytic activity">
    <reaction>
        <text>dUMP + (6R)-5,10-methylene-5,6,7,8-tetrahydrofolate = 7,8-dihydrofolate + dTMP</text>
        <dbReference type="Rhea" id="RHEA:12104"/>
        <dbReference type="ChEBI" id="CHEBI:15636"/>
        <dbReference type="ChEBI" id="CHEBI:57451"/>
        <dbReference type="ChEBI" id="CHEBI:63528"/>
        <dbReference type="ChEBI" id="CHEBI:246422"/>
        <dbReference type="EC" id="2.1.1.45"/>
    </reaction>
</comment>
<comment type="pathway">
    <text>Cofactor biosynthesis; tetrahydrofolate biosynthesis; 5,6,7,8-tetrahydrofolate from 7,8-dihydrofolate: step 1/1.</text>
</comment>
<comment type="subunit">
    <text evidence="1">Homodimer.</text>
</comment>
<comment type="similarity">
    <text evidence="2">In the N-terminal section; belongs to the dihydrofolate reductase family.</text>
</comment>
<comment type="similarity">
    <text evidence="2">In the C-terminal section; belongs to the thymidylate synthase family.</text>
</comment>
<reference key="1">
    <citation type="journal article" date="1994" name="Mol. Biochem. Parasitol.">
        <title>Mechanisms of pyrimethamine resistance in two different strains of Plasmodium berghei.</title>
        <authorList>
            <person name="van Dijk M.R."/>
            <person name="McConkey G.A."/>
            <person name="Vinkenoog R."/>
            <person name="Waters A.P."/>
            <person name="Janse C.J."/>
        </authorList>
    </citation>
    <scope>NUCLEOTIDE SEQUENCE [GENOMIC DNA]</scope>
</reference>
<reference key="2">
    <citation type="journal article" date="1994" name="Mol. Biochem. Parasitol.">
        <title>The dihydrofolate reductase domain of rodent malarias: point mutations and pyrimethamine resistance.</title>
        <authorList>
            <person name="Cheng Q."/>
            <person name="Saul A."/>
        </authorList>
    </citation>
    <scope>NUCLEOTIDE SEQUENCE [GENOMIC DNA] OF 12-201</scope>
</reference>
<name>DRTS_PLABA</name>
<dbReference type="EC" id="1.5.1.3"/>
<dbReference type="EC" id="2.1.1.45"/>
<dbReference type="EMBL" id="U12275">
    <property type="protein sequence ID" value="AAB60237.1"/>
    <property type="molecule type" value="Genomic_DNA"/>
</dbReference>
<dbReference type="EMBL" id="L28119">
    <property type="protein sequence ID" value="AAA29581.1"/>
    <property type="molecule type" value="Genomic_DNA"/>
</dbReference>
<dbReference type="SMR" id="Q27713"/>
<dbReference type="BindingDB" id="Q27713"/>
<dbReference type="ChEMBL" id="CHEMBL3963"/>
<dbReference type="DrugCentral" id="Q27713"/>
<dbReference type="eggNOG" id="KOG0673">
    <property type="taxonomic scope" value="Eukaryota"/>
</dbReference>
<dbReference type="eggNOG" id="KOG1324">
    <property type="taxonomic scope" value="Eukaryota"/>
</dbReference>
<dbReference type="UniPathway" id="UPA00077">
    <property type="reaction ID" value="UER00158"/>
</dbReference>
<dbReference type="GO" id="GO:0005829">
    <property type="term" value="C:cytosol"/>
    <property type="evidence" value="ECO:0007669"/>
    <property type="project" value="TreeGrafter"/>
</dbReference>
<dbReference type="GO" id="GO:0005739">
    <property type="term" value="C:mitochondrion"/>
    <property type="evidence" value="ECO:0007669"/>
    <property type="project" value="TreeGrafter"/>
</dbReference>
<dbReference type="GO" id="GO:0004146">
    <property type="term" value="F:dihydrofolate reductase activity"/>
    <property type="evidence" value="ECO:0007669"/>
    <property type="project" value="UniProtKB-EC"/>
</dbReference>
<dbReference type="GO" id="GO:0004799">
    <property type="term" value="F:thymidylate synthase activity"/>
    <property type="evidence" value="ECO:0007669"/>
    <property type="project" value="UniProtKB-EC"/>
</dbReference>
<dbReference type="GO" id="GO:0006231">
    <property type="term" value="P:dTMP biosynthetic process"/>
    <property type="evidence" value="ECO:0007669"/>
    <property type="project" value="InterPro"/>
</dbReference>
<dbReference type="GO" id="GO:0032259">
    <property type="term" value="P:methylation"/>
    <property type="evidence" value="ECO:0007669"/>
    <property type="project" value="UniProtKB-KW"/>
</dbReference>
<dbReference type="GO" id="GO:0006730">
    <property type="term" value="P:one-carbon metabolic process"/>
    <property type="evidence" value="ECO:0007669"/>
    <property type="project" value="UniProtKB-KW"/>
</dbReference>
<dbReference type="GO" id="GO:0046654">
    <property type="term" value="P:tetrahydrofolate biosynthetic process"/>
    <property type="evidence" value="ECO:0007669"/>
    <property type="project" value="UniProtKB-UniPathway"/>
</dbReference>
<dbReference type="CDD" id="cd00209">
    <property type="entry name" value="DHFR"/>
    <property type="match status" value="1"/>
</dbReference>
<dbReference type="CDD" id="cd00351">
    <property type="entry name" value="TS_Pyrimidine_HMase"/>
    <property type="match status" value="1"/>
</dbReference>
<dbReference type="FunFam" id="3.40.430.10:FF:000007">
    <property type="entry name" value="Bifunctional dihydrofolate reductase-thymidylate synthase"/>
    <property type="match status" value="1"/>
</dbReference>
<dbReference type="FunFam" id="3.30.572.10:FF:000013">
    <property type="entry name" value="Thymidylate synthase"/>
    <property type="match status" value="1"/>
</dbReference>
<dbReference type="Gene3D" id="6.10.250.2210">
    <property type="match status" value="1"/>
</dbReference>
<dbReference type="Gene3D" id="3.40.430.10">
    <property type="entry name" value="Dihydrofolate Reductase, subunit A"/>
    <property type="match status" value="1"/>
</dbReference>
<dbReference type="Gene3D" id="3.30.572.10">
    <property type="entry name" value="Thymidylate synthase/dCMP hydroxymethylase domain"/>
    <property type="match status" value="1"/>
</dbReference>
<dbReference type="HAMAP" id="MF_00008">
    <property type="entry name" value="Thymidy_synth_bact"/>
    <property type="match status" value="1"/>
</dbReference>
<dbReference type="InterPro" id="IPR024072">
    <property type="entry name" value="DHFR-like_dom_sf"/>
</dbReference>
<dbReference type="InterPro" id="IPR012262">
    <property type="entry name" value="DHFR-TS"/>
</dbReference>
<dbReference type="InterPro" id="IPR017925">
    <property type="entry name" value="DHFR_CS"/>
</dbReference>
<dbReference type="InterPro" id="IPR001796">
    <property type="entry name" value="DHFR_dom"/>
</dbReference>
<dbReference type="InterPro" id="IPR045097">
    <property type="entry name" value="Thymidate_synth/dCMP_Mease"/>
</dbReference>
<dbReference type="InterPro" id="IPR023451">
    <property type="entry name" value="Thymidate_synth/dCMP_Mease_dom"/>
</dbReference>
<dbReference type="InterPro" id="IPR036926">
    <property type="entry name" value="Thymidate_synth/dCMP_Mease_sf"/>
</dbReference>
<dbReference type="InterPro" id="IPR000398">
    <property type="entry name" value="Thymidylate_synthase"/>
</dbReference>
<dbReference type="InterPro" id="IPR020940">
    <property type="entry name" value="Thymidylate_synthase_AS"/>
</dbReference>
<dbReference type="NCBIfam" id="NF002497">
    <property type="entry name" value="PRK01827.1-3"/>
    <property type="match status" value="1"/>
</dbReference>
<dbReference type="NCBIfam" id="TIGR03284">
    <property type="entry name" value="thym_sym"/>
    <property type="match status" value="1"/>
</dbReference>
<dbReference type="PANTHER" id="PTHR11548:SF2">
    <property type="entry name" value="THYMIDYLATE SYNTHASE"/>
    <property type="match status" value="1"/>
</dbReference>
<dbReference type="PANTHER" id="PTHR11548">
    <property type="entry name" value="THYMIDYLATE SYNTHASE 1"/>
    <property type="match status" value="1"/>
</dbReference>
<dbReference type="Pfam" id="PF00186">
    <property type="entry name" value="DHFR_1"/>
    <property type="match status" value="1"/>
</dbReference>
<dbReference type="Pfam" id="PF00303">
    <property type="entry name" value="Thymidylat_synt"/>
    <property type="match status" value="1"/>
</dbReference>
<dbReference type="PIRSF" id="PIRSF000389">
    <property type="entry name" value="DHFR-TS"/>
    <property type="match status" value="1"/>
</dbReference>
<dbReference type="PRINTS" id="PR00108">
    <property type="entry name" value="THYMDSNTHASE"/>
</dbReference>
<dbReference type="SUPFAM" id="SSF53597">
    <property type="entry name" value="Dihydrofolate reductase-like"/>
    <property type="match status" value="1"/>
</dbReference>
<dbReference type="SUPFAM" id="SSF55831">
    <property type="entry name" value="Thymidylate synthase/dCMP hydroxymethylase"/>
    <property type="match status" value="1"/>
</dbReference>
<dbReference type="PROSITE" id="PS00075">
    <property type="entry name" value="DHFR_1"/>
    <property type="match status" value="1"/>
</dbReference>
<dbReference type="PROSITE" id="PS51330">
    <property type="entry name" value="DHFR_2"/>
    <property type="match status" value="1"/>
</dbReference>
<dbReference type="PROSITE" id="PS00091">
    <property type="entry name" value="THYMIDYLATE_SYNTHASE"/>
    <property type="match status" value="1"/>
</dbReference>
<protein>
    <recommendedName>
        <fullName>Bifunctional dihydrofolate reductase-thymidylate synthase</fullName>
        <shortName>DHFR-TS</shortName>
    </recommendedName>
    <domain>
        <recommendedName>
            <fullName>Dihydrofolate reductase</fullName>
            <ecNumber>1.5.1.3</ecNumber>
        </recommendedName>
    </domain>
    <domain>
        <recommendedName>
            <fullName>Thymidylate synthase</fullName>
            <ecNumber>2.1.1.45</ecNumber>
        </recommendedName>
    </domain>
</protein>
<accession>Q27713</accession>
<accession>Q27714</accession>
<proteinExistence type="inferred from homology"/>
<keyword id="KW-0489">Methyltransferase</keyword>
<keyword id="KW-0511">Multifunctional enzyme</keyword>
<keyword id="KW-0521">NADP</keyword>
<keyword id="KW-0545">Nucleotide biosynthesis</keyword>
<keyword id="KW-0554">One-carbon metabolism</keyword>
<keyword id="KW-0560">Oxidoreductase</keyword>
<keyword id="KW-0808">Transferase</keyword>
<evidence type="ECO:0000250" key="1"/>
<evidence type="ECO:0000305" key="2"/>
<feature type="chain" id="PRO_0000186347" description="Bifunctional dihydrofolate reductase-thymidylate synthase">
    <location>
        <begin position="1"/>
        <end position="587"/>
    </location>
</feature>
<feature type="domain" description="DHFR">
    <location>
        <begin position="9"/>
        <end position="237"/>
    </location>
</feature>
<feature type="region of interest" description="Thymidylate synthase">
    <location>
        <begin position="301"/>
        <end position="587"/>
    </location>
</feature>
<feature type="active site" evidence="1">
    <location>
        <position position="469"/>
    </location>
</feature>
<feature type="binding site" evidence="1">
    <location>
        <begin position="36"/>
        <end position="42"/>
    </location>
    <ligand>
        <name>NADP(+)</name>
        <dbReference type="ChEBI" id="CHEBI:58349"/>
    </ligand>
</feature>
<feature type="binding site" evidence="1">
    <location>
        <position position="51"/>
    </location>
    <ligand>
        <name>substrate</name>
    </ligand>
</feature>
<feature type="binding site" evidence="1">
    <location>
        <begin position="108"/>
        <end position="110"/>
    </location>
    <ligand>
        <name>NADP(+)</name>
        <dbReference type="ChEBI" id="CHEBI:58349"/>
    </ligand>
</feature>
<feature type="binding site" evidence="1">
    <location>
        <begin position="129"/>
        <end position="132"/>
    </location>
    <ligand>
        <name>NADP(+)</name>
        <dbReference type="ChEBI" id="CHEBI:58349"/>
    </ligand>
</feature>
<feature type="binding site" evidence="1">
    <location>
        <position position="173"/>
    </location>
    <ligand>
        <name>substrate</name>
    </ligand>
</feature>
<feature type="binding site" evidence="1">
    <location>
        <begin position="174"/>
        <end position="181"/>
    </location>
    <ligand>
        <name>NADP(+)</name>
        <dbReference type="ChEBI" id="CHEBI:58349"/>
    </ligand>
</feature>
<feature type="binding site" evidence="1">
    <location>
        <position position="179"/>
    </location>
    <ligand>
        <name>substrate</name>
    </ligand>
</feature>
<feature type="binding site" evidence="1">
    <location>
        <position position="194"/>
    </location>
    <ligand>
        <name>substrate</name>
    </ligand>
</feature>
<feature type="binding site" evidence="1">
    <location>
        <position position="324"/>
    </location>
    <ligand>
        <name>dUMP</name>
        <dbReference type="ChEBI" id="CHEBI:246422"/>
    </ligand>
</feature>
<feature type="binding site" evidence="1">
    <location>
        <position position="470"/>
    </location>
    <ligand>
        <name>dUMP</name>
        <dbReference type="ChEBI" id="CHEBI:246422"/>
    </ligand>
</feature>
<feature type="binding site" evidence="1">
    <location>
        <begin position="488"/>
        <end position="492"/>
    </location>
    <ligand>
        <name>dUMP</name>
        <dbReference type="ChEBI" id="CHEBI:246422"/>
    </ligand>
</feature>
<feature type="binding site" evidence="1">
    <location>
        <position position="500"/>
    </location>
    <ligand>
        <name>dUMP</name>
        <dbReference type="ChEBI" id="CHEBI:246422"/>
    </ligand>
</feature>
<feature type="binding site" evidence="1">
    <location>
        <begin position="530"/>
        <end position="532"/>
    </location>
    <ligand>
        <name>dUMP</name>
        <dbReference type="ChEBI" id="CHEBI:246422"/>
    </ligand>
</feature>
<feature type="sequence variant" description="In pyrimethamine resistance.">
    <original>S</original>
    <variation>N</variation>
    <location>
        <position position="110"/>
    </location>
</feature>
<feature type="sequence variant" description="In pyrimethamine resistance.">
    <original>S</original>
    <variation>F</variation>
    <location>
        <position position="177"/>
    </location>
</feature>
<sequence>MEDLSETFDIYAICACCKVLNDDEKVRCFNNKTFKGIGNAGVLPWKCNLIDMKYFSSVTSYINENNYIRLKWKRDKYMEKHNLKNNVELNTNIISSTNNLQNIVVMGKKSWESIPKKFKPLQNRINIILSRTLKKEDIVNENNNENNNVIIIKSVDDLFPILKCTKYYKCFIIGGSSVYKEFLDRNLIKKIYFTRINNSYNCDVLFPEINENLFKITSISDVYYSNNTTLDFIIYSKTKEINPNEEVPNNTFLGVCDEQNKAFDDEDDYTYFSFNKNKENIKKNSEHAHNFKIYNSIKYKNHPEYQYLNIIYDIIMHGNKQDDRTGVGVLSKFGYMMKFNLNEYFPLLTTKKLFIRGIIEELLWFIRGETNGNTLLEKNVRIWEANGTREFLDNRKLFHREVNDLGPIYGFQWRHFGAEYTDMHDNYKDKGVDQLKNIINLIKNDPTCRRIILCAWNVKNLDQMALPPCHILCQFYVFDGKLSCIMYQRSCDLGLGVPFNIASYSIFTYMIAQVCNLQAAEFIHVLGNAHVYNNHIESLKIQLNRTPYPFPTLKLNPDIKNIEDFTISDFTVQNYVHHDKINMDMAA</sequence>